<protein>
    <recommendedName>
        <fullName evidence="1">3'-5' ssDNA/RNA exonuclease TatD</fullName>
        <ecNumber evidence="1">3.1.11.-</ecNumber>
        <ecNumber evidence="1">3.1.13.-</ecNumber>
    </recommendedName>
    <alternativeName>
        <fullName evidence="1">DNase TatD</fullName>
    </alternativeName>
</protein>
<organism>
    <name type="scientific">Yersinia pseudotuberculosis serotype O:3 (strain YPIII)</name>
    <dbReference type="NCBI Taxonomy" id="502800"/>
    <lineage>
        <taxon>Bacteria</taxon>
        <taxon>Pseudomonadati</taxon>
        <taxon>Pseudomonadota</taxon>
        <taxon>Gammaproteobacteria</taxon>
        <taxon>Enterobacterales</taxon>
        <taxon>Yersiniaceae</taxon>
        <taxon>Yersinia</taxon>
    </lineage>
</organism>
<reference key="1">
    <citation type="submission" date="2008-02" db="EMBL/GenBank/DDBJ databases">
        <title>Complete sequence of Yersinia pseudotuberculosis YPIII.</title>
        <authorList>
            <consortium name="US DOE Joint Genome Institute"/>
            <person name="Copeland A."/>
            <person name="Lucas S."/>
            <person name="Lapidus A."/>
            <person name="Glavina del Rio T."/>
            <person name="Dalin E."/>
            <person name="Tice H."/>
            <person name="Bruce D."/>
            <person name="Goodwin L."/>
            <person name="Pitluck S."/>
            <person name="Munk A.C."/>
            <person name="Brettin T."/>
            <person name="Detter J.C."/>
            <person name="Han C."/>
            <person name="Tapia R."/>
            <person name="Schmutz J."/>
            <person name="Larimer F."/>
            <person name="Land M."/>
            <person name="Hauser L."/>
            <person name="Challacombe J.F."/>
            <person name="Green L."/>
            <person name="Lindler L.E."/>
            <person name="Nikolich M.P."/>
            <person name="Richardson P."/>
        </authorList>
    </citation>
    <scope>NUCLEOTIDE SEQUENCE [LARGE SCALE GENOMIC DNA]</scope>
    <source>
        <strain>YPIII</strain>
    </source>
</reference>
<dbReference type="EC" id="3.1.11.-" evidence="1"/>
<dbReference type="EC" id="3.1.13.-" evidence="1"/>
<dbReference type="EMBL" id="CP000950">
    <property type="protein sequence ID" value="ACA70202.1"/>
    <property type="molecule type" value="Genomic_DNA"/>
</dbReference>
<dbReference type="RefSeq" id="WP_012304710.1">
    <property type="nucleotide sequence ID" value="NZ_CP009792.1"/>
</dbReference>
<dbReference type="SMR" id="B1JP69"/>
<dbReference type="KEGG" id="ypy:YPK_3939"/>
<dbReference type="PATRIC" id="fig|502800.11.peg.288"/>
<dbReference type="GO" id="GO:0005737">
    <property type="term" value="C:cytoplasm"/>
    <property type="evidence" value="ECO:0007669"/>
    <property type="project" value="UniProtKB-SubCell"/>
</dbReference>
<dbReference type="GO" id="GO:0000175">
    <property type="term" value="F:3'-5'-RNA exonuclease activity"/>
    <property type="evidence" value="ECO:0007669"/>
    <property type="project" value="UniProtKB-UniRule"/>
</dbReference>
<dbReference type="GO" id="GO:0000287">
    <property type="term" value="F:magnesium ion binding"/>
    <property type="evidence" value="ECO:0007669"/>
    <property type="project" value="UniProtKB-UniRule"/>
</dbReference>
<dbReference type="GO" id="GO:0008310">
    <property type="term" value="F:single-stranded DNA 3'-5' DNA exonuclease activity"/>
    <property type="evidence" value="ECO:0007669"/>
    <property type="project" value="UniProtKB-UniRule"/>
</dbReference>
<dbReference type="CDD" id="cd01310">
    <property type="entry name" value="TatD_DNAse"/>
    <property type="match status" value="1"/>
</dbReference>
<dbReference type="FunFam" id="3.20.20.140:FF:000018">
    <property type="entry name" value="3'-5' ssDNA/RNA exonuclease TatD"/>
    <property type="match status" value="1"/>
</dbReference>
<dbReference type="Gene3D" id="3.20.20.140">
    <property type="entry name" value="Metal-dependent hydrolases"/>
    <property type="match status" value="1"/>
</dbReference>
<dbReference type="HAMAP" id="MF_00901">
    <property type="entry name" value="TatD_exonuclease"/>
    <property type="match status" value="1"/>
</dbReference>
<dbReference type="InterPro" id="IPR018228">
    <property type="entry name" value="DNase_TatD-rel_CS"/>
</dbReference>
<dbReference type="InterPro" id="IPR024918">
    <property type="entry name" value="Exonuc_TatD"/>
</dbReference>
<dbReference type="InterPro" id="IPR032466">
    <property type="entry name" value="Metal_Hydrolase"/>
</dbReference>
<dbReference type="InterPro" id="IPR001130">
    <property type="entry name" value="TatD-like"/>
</dbReference>
<dbReference type="InterPro" id="IPR050891">
    <property type="entry name" value="TatD-type_Hydrolase"/>
</dbReference>
<dbReference type="NCBIfam" id="NF007745">
    <property type="entry name" value="PRK10425.1"/>
    <property type="match status" value="1"/>
</dbReference>
<dbReference type="PANTHER" id="PTHR10060:SF15">
    <property type="entry name" value="DEOXYRIBONUCLEASE TATDN1"/>
    <property type="match status" value="1"/>
</dbReference>
<dbReference type="PANTHER" id="PTHR10060">
    <property type="entry name" value="TATD FAMILY DEOXYRIBONUCLEASE"/>
    <property type="match status" value="1"/>
</dbReference>
<dbReference type="Pfam" id="PF01026">
    <property type="entry name" value="TatD_DNase"/>
    <property type="match status" value="1"/>
</dbReference>
<dbReference type="PIRSF" id="PIRSF005902">
    <property type="entry name" value="DNase_TatD"/>
    <property type="match status" value="1"/>
</dbReference>
<dbReference type="SUPFAM" id="SSF51556">
    <property type="entry name" value="Metallo-dependent hydrolases"/>
    <property type="match status" value="1"/>
</dbReference>
<dbReference type="PROSITE" id="PS01090">
    <property type="entry name" value="TATD_2"/>
    <property type="match status" value="1"/>
</dbReference>
<dbReference type="PROSITE" id="PS01091">
    <property type="entry name" value="TATD_3"/>
    <property type="match status" value="1"/>
</dbReference>
<comment type="function">
    <text evidence="1">3'-5' exonuclease that prefers single-stranded DNA and RNA. May play a role in the H(2)O(2)-induced DNA damage repair.</text>
</comment>
<comment type="cofactor">
    <cofactor evidence="1">
        <name>Mg(2+)</name>
        <dbReference type="ChEBI" id="CHEBI:18420"/>
    </cofactor>
</comment>
<comment type="subunit">
    <text evidence="1">Monomer.</text>
</comment>
<comment type="subcellular location">
    <subcellularLocation>
        <location evidence="1">Cytoplasm</location>
    </subcellularLocation>
</comment>
<comment type="similarity">
    <text evidence="1">Belongs to the metallo-dependent hydrolases superfamily. TatD-type hydrolase family. TatD subfamily.</text>
</comment>
<feature type="chain" id="PRO_0000412754" description="3'-5' ssDNA/RNA exonuclease TatD">
    <location>
        <begin position="1"/>
        <end position="260"/>
    </location>
</feature>
<feature type="binding site" evidence="1">
    <location>
        <position position="92"/>
    </location>
    <ligand>
        <name>a divalent metal cation</name>
        <dbReference type="ChEBI" id="CHEBI:60240"/>
    </ligand>
</feature>
<feature type="binding site" evidence="1">
    <location>
        <position position="128"/>
    </location>
    <ligand>
        <name>a divalent metal cation</name>
        <dbReference type="ChEBI" id="CHEBI:60240"/>
    </ligand>
</feature>
<feature type="binding site" evidence="1">
    <location>
        <position position="153"/>
    </location>
    <ligand>
        <name>a divalent metal cation</name>
        <dbReference type="ChEBI" id="CHEBI:60240"/>
    </ligand>
</feature>
<proteinExistence type="inferred from homology"/>
<accession>B1JP69</accession>
<evidence type="ECO:0000255" key="1">
    <source>
        <dbReference type="HAMAP-Rule" id="MF_00901"/>
    </source>
</evidence>
<keyword id="KW-0963">Cytoplasm</keyword>
<keyword id="KW-0269">Exonuclease</keyword>
<keyword id="KW-0378">Hydrolase</keyword>
<keyword id="KW-0460">Magnesium</keyword>
<keyword id="KW-0479">Metal-binding</keyword>
<keyword id="KW-0540">Nuclease</keyword>
<sequence>MFDIGVNLTSVQFAKDYHQVVNRAKEAGVLGILITGTDADESLAAQTLAAEYPGYCWSTTGVHPHHASSWQDSVEQKIRTLAATASVVAIGECGLDFNRNFSTPAQQEVAFTAQLALAAELSLPVFLHCRDAHERFIDLLVPWLDKIPAAVVHCFTGNSDELDACLALGLSIGITGWVCDERRGLDLRALLPRIPVQQLLLETDAPYLLPRDLNPKPASRRNEPCFLPHIVQQVAAWRQEDPNWLGQKTDENARRVFRLV</sequence>
<gene>
    <name evidence="1" type="primary">tatD</name>
    <name type="ordered locus">YPK_3939</name>
</gene>
<name>TATD_YERPY</name>